<name>PGK_CLOP1</name>
<keyword id="KW-0067">ATP-binding</keyword>
<keyword id="KW-0963">Cytoplasm</keyword>
<keyword id="KW-0324">Glycolysis</keyword>
<keyword id="KW-0418">Kinase</keyword>
<keyword id="KW-0547">Nucleotide-binding</keyword>
<keyword id="KW-0808">Transferase</keyword>
<dbReference type="EC" id="2.7.2.3" evidence="1"/>
<dbReference type="EMBL" id="CP000246">
    <property type="protein sequence ID" value="ABG83401.1"/>
    <property type="molecule type" value="Genomic_DNA"/>
</dbReference>
<dbReference type="RefSeq" id="WP_003450483.1">
    <property type="nucleotide sequence ID" value="NC_008261.1"/>
</dbReference>
<dbReference type="SMR" id="Q0TQY7"/>
<dbReference type="STRING" id="195103.CPF_1510"/>
<dbReference type="PaxDb" id="195103-CPF_1510"/>
<dbReference type="KEGG" id="cpf:CPF_1510"/>
<dbReference type="eggNOG" id="COG0126">
    <property type="taxonomic scope" value="Bacteria"/>
</dbReference>
<dbReference type="HOGENOM" id="CLU_025427_0_2_9"/>
<dbReference type="UniPathway" id="UPA00109">
    <property type="reaction ID" value="UER00185"/>
</dbReference>
<dbReference type="Proteomes" id="UP000001823">
    <property type="component" value="Chromosome"/>
</dbReference>
<dbReference type="GO" id="GO:0005829">
    <property type="term" value="C:cytosol"/>
    <property type="evidence" value="ECO:0007669"/>
    <property type="project" value="TreeGrafter"/>
</dbReference>
<dbReference type="GO" id="GO:0043531">
    <property type="term" value="F:ADP binding"/>
    <property type="evidence" value="ECO:0007669"/>
    <property type="project" value="TreeGrafter"/>
</dbReference>
<dbReference type="GO" id="GO:0005524">
    <property type="term" value="F:ATP binding"/>
    <property type="evidence" value="ECO:0007669"/>
    <property type="project" value="UniProtKB-KW"/>
</dbReference>
<dbReference type="GO" id="GO:0004618">
    <property type="term" value="F:phosphoglycerate kinase activity"/>
    <property type="evidence" value="ECO:0007669"/>
    <property type="project" value="UniProtKB-UniRule"/>
</dbReference>
<dbReference type="GO" id="GO:0006094">
    <property type="term" value="P:gluconeogenesis"/>
    <property type="evidence" value="ECO:0007669"/>
    <property type="project" value="TreeGrafter"/>
</dbReference>
<dbReference type="GO" id="GO:0006096">
    <property type="term" value="P:glycolytic process"/>
    <property type="evidence" value="ECO:0007669"/>
    <property type="project" value="UniProtKB-UniRule"/>
</dbReference>
<dbReference type="CDD" id="cd00318">
    <property type="entry name" value="Phosphoglycerate_kinase"/>
    <property type="match status" value="1"/>
</dbReference>
<dbReference type="FunFam" id="3.40.50.1260:FF:000007">
    <property type="entry name" value="Phosphoglycerate kinase"/>
    <property type="match status" value="1"/>
</dbReference>
<dbReference type="FunFam" id="3.40.50.1260:FF:000008">
    <property type="entry name" value="Phosphoglycerate kinase"/>
    <property type="match status" value="1"/>
</dbReference>
<dbReference type="Gene3D" id="3.40.50.1260">
    <property type="entry name" value="Phosphoglycerate kinase, N-terminal domain"/>
    <property type="match status" value="2"/>
</dbReference>
<dbReference type="HAMAP" id="MF_00145">
    <property type="entry name" value="Phosphoglyc_kinase"/>
    <property type="match status" value="1"/>
</dbReference>
<dbReference type="InterPro" id="IPR001576">
    <property type="entry name" value="Phosphoglycerate_kinase"/>
</dbReference>
<dbReference type="InterPro" id="IPR015911">
    <property type="entry name" value="Phosphoglycerate_kinase_CS"/>
</dbReference>
<dbReference type="InterPro" id="IPR015824">
    <property type="entry name" value="Phosphoglycerate_kinase_N"/>
</dbReference>
<dbReference type="InterPro" id="IPR036043">
    <property type="entry name" value="Phosphoglycerate_kinase_sf"/>
</dbReference>
<dbReference type="PANTHER" id="PTHR11406">
    <property type="entry name" value="PHOSPHOGLYCERATE KINASE"/>
    <property type="match status" value="1"/>
</dbReference>
<dbReference type="PANTHER" id="PTHR11406:SF23">
    <property type="entry name" value="PHOSPHOGLYCERATE KINASE 1, CHLOROPLASTIC-RELATED"/>
    <property type="match status" value="1"/>
</dbReference>
<dbReference type="Pfam" id="PF00162">
    <property type="entry name" value="PGK"/>
    <property type="match status" value="1"/>
</dbReference>
<dbReference type="PIRSF" id="PIRSF000724">
    <property type="entry name" value="Pgk"/>
    <property type="match status" value="1"/>
</dbReference>
<dbReference type="PRINTS" id="PR00477">
    <property type="entry name" value="PHGLYCKINASE"/>
</dbReference>
<dbReference type="SUPFAM" id="SSF53748">
    <property type="entry name" value="Phosphoglycerate kinase"/>
    <property type="match status" value="1"/>
</dbReference>
<dbReference type="PROSITE" id="PS00111">
    <property type="entry name" value="PGLYCERATE_KINASE"/>
    <property type="match status" value="1"/>
</dbReference>
<proteinExistence type="inferred from homology"/>
<accession>Q0TQY7</accession>
<gene>
    <name evidence="1" type="primary">pgk</name>
    <name type="ordered locus">CPF_1510</name>
</gene>
<comment type="catalytic activity">
    <reaction evidence="1">
        <text>(2R)-3-phosphoglycerate + ATP = (2R)-3-phospho-glyceroyl phosphate + ADP</text>
        <dbReference type="Rhea" id="RHEA:14801"/>
        <dbReference type="ChEBI" id="CHEBI:30616"/>
        <dbReference type="ChEBI" id="CHEBI:57604"/>
        <dbReference type="ChEBI" id="CHEBI:58272"/>
        <dbReference type="ChEBI" id="CHEBI:456216"/>
        <dbReference type="EC" id="2.7.2.3"/>
    </reaction>
</comment>
<comment type="pathway">
    <text evidence="1">Carbohydrate degradation; glycolysis; pyruvate from D-glyceraldehyde 3-phosphate: step 2/5.</text>
</comment>
<comment type="subunit">
    <text evidence="1">Monomer.</text>
</comment>
<comment type="subcellular location">
    <subcellularLocation>
        <location evidence="1">Cytoplasm</location>
    </subcellularLocation>
</comment>
<comment type="similarity">
    <text evidence="1">Belongs to the phosphoglycerate kinase family.</text>
</comment>
<feature type="chain" id="PRO_1000009610" description="Phosphoglycerate kinase">
    <location>
        <begin position="1"/>
        <end position="397"/>
    </location>
</feature>
<feature type="binding site" evidence="1">
    <location>
        <begin position="23"/>
        <end position="25"/>
    </location>
    <ligand>
        <name>substrate</name>
    </ligand>
</feature>
<feature type="binding site" evidence="1">
    <location>
        <position position="38"/>
    </location>
    <ligand>
        <name>substrate</name>
    </ligand>
</feature>
<feature type="binding site" evidence="1">
    <location>
        <begin position="61"/>
        <end position="64"/>
    </location>
    <ligand>
        <name>substrate</name>
    </ligand>
</feature>
<feature type="binding site" evidence="1">
    <location>
        <position position="122"/>
    </location>
    <ligand>
        <name>substrate</name>
    </ligand>
</feature>
<feature type="binding site" evidence="1">
    <location>
        <position position="155"/>
    </location>
    <ligand>
        <name>substrate</name>
    </ligand>
</feature>
<feature type="binding site" evidence="1">
    <location>
        <position position="206"/>
    </location>
    <ligand>
        <name>ATP</name>
        <dbReference type="ChEBI" id="CHEBI:30616"/>
    </ligand>
</feature>
<feature type="binding site" evidence="1">
    <location>
        <position position="296"/>
    </location>
    <ligand>
        <name>ATP</name>
        <dbReference type="ChEBI" id="CHEBI:30616"/>
    </ligand>
</feature>
<feature type="binding site" evidence="1">
    <location>
        <position position="327"/>
    </location>
    <ligand>
        <name>ATP</name>
        <dbReference type="ChEBI" id="CHEBI:30616"/>
    </ligand>
</feature>
<feature type="binding site" evidence="1">
    <location>
        <begin position="353"/>
        <end position="356"/>
    </location>
    <ligand>
        <name>ATP</name>
        <dbReference type="ChEBI" id="CHEBI:30616"/>
    </ligand>
</feature>
<sequence>MNFNKKTIEDVQVKGKKVLVRCDFNVPLKDGVITDENRLNGAMPTIKYLVDNGAKVILCSHMGKPKGEAKPEFSLAPVAKRLSEMLGKEVVFAADDNVVGENAKKAVAEMKDGDVVLLQNTRYRKEETKNGEELSKELASLAEMFVNDAFGTAHRAHCSTVGVTEYLKPAVCGYLIQKELKFLGDAVETPERPFVAILGGAKVSDKINVINNLLEKVDTLIIGGGMAYTFLKAQGYTVGSSLVEEDKVEYAKEMLAKAEEKGVKLLLPVDHRVAKEFKDVEAVVTEDQNIAEGFMGLDIGPKTEAIYAEAIKDAKTVIWNGPMGVFEFENFNKGTIAVAKAMAEADATTIIGGGDSAAAVNILGFGDKMSHISTGGGASLEFLEGKVLPGIAALNDK</sequence>
<protein>
    <recommendedName>
        <fullName evidence="1">Phosphoglycerate kinase</fullName>
        <ecNumber evidence="1">2.7.2.3</ecNumber>
    </recommendedName>
</protein>
<reference key="1">
    <citation type="journal article" date="2006" name="Genome Res.">
        <title>Skewed genomic variability in strains of the toxigenic bacterial pathogen, Clostridium perfringens.</title>
        <authorList>
            <person name="Myers G.S.A."/>
            <person name="Rasko D.A."/>
            <person name="Cheung J.K."/>
            <person name="Ravel J."/>
            <person name="Seshadri R."/>
            <person name="DeBoy R.T."/>
            <person name="Ren Q."/>
            <person name="Varga J."/>
            <person name="Awad M.M."/>
            <person name="Brinkac L.M."/>
            <person name="Daugherty S.C."/>
            <person name="Haft D.H."/>
            <person name="Dodson R.J."/>
            <person name="Madupu R."/>
            <person name="Nelson W.C."/>
            <person name="Rosovitz M.J."/>
            <person name="Sullivan S.A."/>
            <person name="Khouri H."/>
            <person name="Dimitrov G.I."/>
            <person name="Watkins K.L."/>
            <person name="Mulligan S."/>
            <person name="Benton J."/>
            <person name="Radune D."/>
            <person name="Fisher D.J."/>
            <person name="Atkins H.S."/>
            <person name="Hiscox T."/>
            <person name="Jost B.H."/>
            <person name="Billington S.J."/>
            <person name="Songer J.G."/>
            <person name="McClane B.A."/>
            <person name="Titball R.W."/>
            <person name="Rood J.I."/>
            <person name="Melville S.B."/>
            <person name="Paulsen I.T."/>
        </authorList>
    </citation>
    <scope>NUCLEOTIDE SEQUENCE [LARGE SCALE GENOMIC DNA]</scope>
    <source>
        <strain>ATCC 13124 / DSM 756 / JCM 1290 / NCIMB 6125 / NCTC 8237 / S 107 / Type A</strain>
    </source>
</reference>
<evidence type="ECO:0000255" key="1">
    <source>
        <dbReference type="HAMAP-Rule" id="MF_00145"/>
    </source>
</evidence>
<organism>
    <name type="scientific">Clostridium perfringens (strain ATCC 13124 / DSM 756 / JCM 1290 / NCIMB 6125 / NCTC 8237 / Type A)</name>
    <dbReference type="NCBI Taxonomy" id="195103"/>
    <lineage>
        <taxon>Bacteria</taxon>
        <taxon>Bacillati</taxon>
        <taxon>Bacillota</taxon>
        <taxon>Clostridia</taxon>
        <taxon>Eubacteriales</taxon>
        <taxon>Clostridiaceae</taxon>
        <taxon>Clostridium</taxon>
    </lineage>
</organism>